<protein>
    <recommendedName>
        <fullName evidence="1">3-hydroxy-5-phosphonooxypentane-2,4-dione thiolase</fullName>
        <ecNumber evidence="1">2.3.1.245</ecNumber>
    </recommendedName>
</protein>
<sequence length="291" mass="31563">MADLDDIKDGKDFGIGIPQQNPAFTLKGSGSLDWGMQSRLARIFNPKTNRTVMLAFDHGYFQGPTTGLERIDINIAPLFEYADVLMCTRGILRSVVPAAANRPVVLRASGANSILTDLSNEAVAVAMEDAVRLNACAVAAQVYIGTEHEHQSIKNIIQLIDQGMRYGMPTMAVTGVGKDMVRDQRYFSLASRIAAEMGAQVIKTYYVDSGFERIAAGCPVPIVIAGGKKLPERDALEMCYQAIDQGASGVDMGRNIFQSDAPIAMLKAVHAIVHKNENAAAAYQLFLHEQN</sequence>
<accession>Q66EZ3</accession>
<comment type="function">
    <text evidence="1">Involved in the degradation of phospho-AI-2, thereby terminating induction of the lsr operon and closing the AI-2 signaling cycle. Catalyzes the transfer of an acetyl moiety from 3-hydroxy-5-phosphonooxypentane-2,4-dione to CoA to form glycerone phosphate and acetyl-CoA.</text>
</comment>
<comment type="catalytic activity">
    <reaction evidence="1">
        <text>dihydroxyacetone phosphate + acetyl-CoA = 3-hydroxy-2,4-dioxopentyl phosphate + CoA</text>
        <dbReference type="Rhea" id="RHEA:44736"/>
        <dbReference type="ChEBI" id="CHEBI:57287"/>
        <dbReference type="ChEBI" id="CHEBI:57288"/>
        <dbReference type="ChEBI" id="CHEBI:57642"/>
        <dbReference type="ChEBI" id="CHEBI:84359"/>
        <dbReference type="EC" id="2.3.1.245"/>
    </reaction>
</comment>
<comment type="subunit">
    <text evidence="1">Homodecamer.</text>
</comment>
<comment type="subcellular location">
    <subcellularLocation>
        <location evidence="1">Cytoplasm</location>
    </subcellularLocation>
</comment>
<comment type="similarity">
    <text evidence="1">Belongs to the DeoC/FbaB aldolase family.</text>
</comment>
<feature type="chain" id="PRO_0000351539" description="3-hydroxy-5-phosphonooxypentane-2,4-dione thiolase">
    <location>
        <begin position="1"/>
        <end position="291"/>
    </location>
</feature>
<feature type="active site" description="Schiff-base intermediate with substrate" evidence="1">
    <location>
        <position position="203"/>
    </location>
</feature>
<name>LSRF_YERPS</name>
<dbReference type="EC" id="2.3.1.245" evidence="1"/>
<dbReference type="EMBL" id="BX936398">
    <property type="protein sequence ID" value="CAH19788.1"/>
    <property type="molecule type" value="Genomic_DNA"/>
</dbReference>
<dbReference type="RefSeq" id="WP_011191661.1">
    <property type="nucleotide sequence ID" value="NC_006155.1"/>
</dbReference>
<dbReference type="SMR" id="Q66EZ3"/>
<dbReference type="KEGG" id="ypo:BZ17_2011"/>
<dbReference type="KEGG" id="yps:YPTB0548"/>
<dbReference type="PATRIC" id="fig|273123.14.peg.2137"/>
<dbReference type="Proteomes" id="UP000001011">
    <property type="component" value="Chromosome"/>
</dbReference>
<dbReference type="GO" id="GO:0005737">
    <property type="term" value="C:cytoplasm"/>
    <property type="evidence" value="ECO:0007669"/>
    <property type="project" value="UniProtKB-SubCell"/>
</dbReference>
<dbReference type="GO" id="GO:0016747">
    <property type="term" value="F:acyltransferase activity, transferring groups other than amino-acyl groups"/>
    <property type="evidence" value="ECO:0007669"/>
    <property type="project" value="UniProtKB-UniRule"/>
</dbReference>
<dbReference type="GO" id="GO:0004332">
    <property type="term" value="F:fructose-bisphosphate aldolase activity"/>
    <property type="evidence" value="ECO:0007669"/>
    <property type="project" value="InterPro"/>
</dbReference>
<dbReference type="CDD" id="cd00958">
    <property type="entry name" value="DhnA"/>
    <property type="match status" value="1"/>
</dbReference>
<dbReference type="Gene3D" id="3.20.20.70">
    <property type="entry name" value="Aldolase class I"/>
    <property type="match status" value="1"/>
</dbReference>
<dbReference type="HAMAP" id="MF_02052">
    <property type="entry name" value="LsrF"/>
    <property type="match status" value="1"/>
</dbReference>
<dbReference type="InterPro" id="IPR013785">
    <property type="entry name" value="Aldolase_TIM"/>
</dbReference>
<dbReference type="InterPro" id="IPR002915">
    <property type="entry name" value="DeoC/FbaB/LacD_aldolase"/>
</dbReference>
<dbReference type="InterPro" id="IPR050456">
    <property type="entry name" value="DeoC/FbaB_aldolase"/>
</dbReference>
<dbReference type="InterPro" id="IPR041720">
    <property type="entry name" value="FbaB-like"/>
</dbReference>
<dbReference type="InterPro" id="IPR033673">
    <property type="entry name" value="LsrF"/>
</dbReference>
<dbReference type="NCBIfam" id="NF006081">
    <property type="entry name" value="PRK08227.1"/>
    <property type="match status" value="1"/>
</dbReference>
<dbReference type="PANTHER" id="PTHR47916:SF1">
    <property type="entry name" value="3-HYDROXY-5-PHOSPHONOOXYPENTANE-2,4-DIONE THIOLASE"/>
    <property type="match status" value="1"/>
</dbReference>
<dbReference type="PANTHER" id="PTHR47916">
    <property type="entry name" value="FRUCTOSE-BISPHOSPHATE ALDOLASE CLASS 1"/>
    <property type="match status" value="1"/>
</dbReference>
<dbReference type="Pfam" id="PF01791">
    <property type="entry name" value="DeoC"/>
    <property type="match status" value="1"/>
</dbReference>
<dbReference type="PIRSF" id="PIRSF038992">
    <property type="entry name" value="Aldolase_Ia"/>
    <property type="match status" value="1"/>
</dbReference>
<dbReference type="SMART" id="SM01133">
    <property type="entry name" value="DeoC"/>
    <property type="match status" value="1"/>
</dbReference>
<dbReference type="SUPFAM" id="SSF51569">
    <property type="entry name" value="Aldolase"/>
    <property type="match status" value="1"/>
</dbReference>
<organism>
    <name type="scientific">Yersinia pseudotuberculosis serotype I (strain IP32953)</name>
    <dbReference type="NCBI Taxonomy" id="273123"/>
    <lineage>
        <taxon>Bacteria</taxon>
        <taxon>Pseudomonadati</taxon>
        <taxon>Pseudomonadota</taxon>
        <taxon>Gammaproteobacteria</taxon>
        <taxon>Enterobacterales</taxon>
        <taxon>Yersiniaceae</taxon>
        <taxon>Yersinia</taxon>
    </lineage>
</organism>
<reference key="1">
    <citation type="journal article" date="2004" name="Proc. Natl. Acad. Sci. U.S.A.">
        <title>Insights into the evolution of Yersinia pestis through whole-genome comparison with Yersinia pseudotuberculosis.</title>
        <authorList>
            <person name="Chain P.S.G."/>
            <person name="Carniel E."/>
            <person name="Larimer F.W."/>
            <person name="Lamerdin J."/>
            <person name="Stoutland P.O."/>
            <person name="Regala W.M."/>
            <person name="Georgescu A.M."/>
            <person name="Vergez L.M."/>
            <person name="Land M.L."/>
            <person name="Motin V.L."/>
            <person name="Brubaker R.R."/>
            <person name="Fowler J."/>
            <person name="Hinnebusch J."/>
            <person name="Marceau M."/>
            <person name="Medigue C."/>
            <person name="Simonet M."/>
            <person name="Chenal-Francisque V."/>
            <person name="Souza B."/>
            <person name="Dacheux D."/>
            <person name="Elliott J.M."/>
            <person name="Derbise A."/>
            <person name="Hauser L.J."/>
            <person name="Garcia E."/>
        </authorList>
    </citation>
    <scope>NUCLEOTIDE SEQUENCE [LARGE SCALE GENOMIC DNA]</scope>
    <source>
        <strain>IP32953</strain>
    </source>
</reference>
<proteinExistence type="inferred from homology"/>
<evidence type="ECO:0000255" key="1">
    <source>
        <dbReference type="HAMAP-Rule" id="MF_02052"/>
    </source>
</evidence>
<keyword id="KW-0963">Cytoplasm</keyword>
<keyword id="KW-0704">Schiff base</keyword>
<keyword id="KW-0808">Transferase</keyword>
<gene>
    <name evidence="1" type="primary">lsrF</name>
    <name type="ordered locus">YPTB0548</name>
</gene>